<gene>
    <name evidence="6" type="ORF">OsI_13614</name>
</gene>
<protein>
    <recommendedName>
        <fullName evidence="5">Origin of replication complex subunit 5</fullName>
        <shortName evidence="5">OsORC5</shortName>
    </recommendedName>
</protein>
<proteinExistence type="inferred from homology"/>
<comment type="function">
    <text evidence="1">Component of the origin recognition complex (ORC) that binds origins of replication. DNA-binding is ATP-dependent. The specific DNA sequences that define origins of replication have not been identified yet. ORC is required to assemble the pre-replication complex necessary to initiate DNA replication.</text>
</comment>
<comment type="subunit">
    <text evidence="2">Component of the origin recognition complex (ORC) composed of at least ORC1, ORC2, ORC3, ORC4, ORC5 and ORC6. ORC is regulated in a cell-cycle and development dependent manner. It is sequentially assembled at the exit from anaphase of mitosis and disassembled as cells enter S phase.</text>
</comment>
<comment type="subcellular location">
    <subcellularLocation>
        <location evidence="1">Nucleus</location>
    </subcellularLocation>
</comment>
<comment type="similarity">
    <text evidence="5">Belongs to the ORC5 family.</text>
</comment>
<feature type="chain" id="PRO_0000431437" description="Origin of replication complex subunit 5">
    <location>
        <begin position="1"/>
        <end position="524"/>
    </location>
</feature>
<feature type="region of interest" description="Disordered" evidence="4">
    <location>
        <begin position="1"/>
        <end position="56"/>
    </location>
</feature>
<feature type="compositionally biased region" description="Low complexity" evidence="4">
    <location>
        <begin position="1"/>
        <end position="19"/>
    </location>
</feature>
<feature type="compositionally biased region" description="Pro residues" evidence="4">
    <location>
        <begin position="20"/>
        <end position="31"/>
    </location>
</feature>
<feature type="compositionally biased region" description="Low complexity" evidence="4">
    <location>
        <begin position="39"/>
        <end position="49"/>
    </location>
</feature>
<feature type="binding site" evidence="3">
    <location>
        <begin position="90"/>
        <end position="97"/>
    </location>
    <ligand>
        <name>ATP</name>
        <dbReference type="ChEBI" id="CHEBI:30616"/>
    </ligand>
</feature>
<sequence>MSQPVTPRRTTRSSASASPSPAPASPTSPPKSRPKPSPRRQLLAAAAAPPKEDGSSADALLAELPGRRAQAMDILRLLAPAPALPLMLHGGAATGKTRALLLALRYLRPSQRLVYAALRSLPSPRALFASLLSQLSATPFSTSSRHRVPDKPSDFVAALRDALNGIVSQGEVVYLVFDNLEVVRSWDKGGQLLPLLLRLHDLLQLPQVVLVYVSSATPDAYYSMTGSVEPNYVYFPDYTVDEVRDILMHDHPNPKLYSSFLSVALKPLFRVTRRVDELSAVLEPLFRRYCEPLGDLKAVPDEGMKRRLFEHVQSHLAVALNETFNVPMRASMDEIKDGGSAGKGSAKRQFAGKDGLSSELEFHMSVSAKYLLLSAFLASRNPATLDAALFDSTGGLDNRKRKRKSSQASMHMKDTIVEEMLMKGPGTFPLERLLAIFQCITSVSEDILDEIDCPGNMASESGTTGLMSDVLLQLSTLCNSNFLSKSRSCPLEGSARYRSNIDEDLALKVARSVNFPLSKYMYRR</sequence>
<dbReference type="EMBL" id="CM000128">
    <property type="protein sequence ID" value="EEC76215.1"/>
    <property type="molecule type" value="Genomic_DNA"/>
</dbReference>
<dbReference type="SMR" id="B8AK78"/>
<dbReference type="STRING" id="39946.B8AK78"/>
<dbReference type="EnsemblPlants" id="BGIOSGA013599-TA">
    <property type="protein sequence ID" value="BGIOSGA013599-PA"/>
    <property type="gene ID" value="BGIOSGA013599"/>
</dbReference>
<dbReference type="EnsemblPlants" id="OsKYG_03g0035380.01">
    <property type="protein sequence ID" value="OsKYG_03g0035380.01"/>
    <property type="gene ID" value="OsKYG_03g0035380"/>
</dbReference>
<dbReference type="EnsemblPlants" id="OsLima_03g0035350.01">
    <property type="protein sequence ID" value="OsLima_03g0035350.01"/>
    <property type="gene ID" value="OsLima_03g0035350"/>
</dbReference>
<dbReference type="EnsemblPlants" id="OsLiXu_03g0035110.01">
    <property type="protein sequence ID" value="OsLiXu_03g0035110.01"/>
    <property type="gene ID" value="OsLiXu_03g0035110"/>
</dbReference>
<dbReference type="Gramene" id="BGIOSGA013599-TA">
    <property type="protein sequence ID" value="BGIOSGA013599-PA"/>
    <property type="gene ID" value="BGIOSGA013599"/>
</dbReference>
<dbReference type="Gramene" id="OsKYG_03g0035380.01">
    <property type="protein sequence ID" value="OsKYG_03g0035380.01"/>
    <property type="gene ID" value="OsKYG_03g0035380"/>
</dbReference>
<dbReference type="Gramene" id="OsLima_03g0035350.01">
    <property type="protein sequence ID" value="OsLima_03g0035350.01"/>
    <property type="gene ID" value="OsLima_03g0035350"/>
</dbReference>
<dbReference type="Gramene" id="OsLiXu_03g0035110.01">
    <property type="protein sequence ID" value="OsLiXu_03g0035110.01"/>
    <property type="gene ID" value="OsLiXu_03g0035110"/>
</dbReference>
<dbReference type="HOGENOM" id="CLU_028223_1_0_1"/>
<dbReference type="OMA" id="QLRRWHG"/>
<dbReference type="Proteomes" id="UP000007015">
    <property type="component" value="Chromosome 3"/>
</dbReference>
<dbReference type="GO" id="GO:0005664">
    <property type="term" value="C:nuclear origin of replication recognition complex"/>
    <property type="evidence" value="ECO:0007669"/>
    <property type="project" value="TreeGrafter"/>
</dbReference>
<dbReference type="GO" id="GO:0005524">
    <property type="term" value="F:ATP binding"/>
    <property type="evidence" value="ECO:0007669"/>
    <property type="project" value="UniProtKB-KW"/>
</dbReference>
<dbReference type="GO" id="GO:0003688">
    <property type="term" value="F:DNA replication origin binding"/>
    <property type="evidence" value="ECO:0007669"/>
    <property type="project" value="TreeGrafter"/>
</dbReference>
<dbReference type="GO" id="GO:0006270">
    <property type="term" value="P:DNA replication initiation"/>
    <property type="evidence" value="ECO:0007669"/>
    <property type="project" value="TreeGrafter"/>
</dbReference>
<dbReference type="GO" id="GO:0009744">
    <property type="term" value="P:response to sucrose"/>
    <property type="evidence" value="ECO:0007669"/>
    <property type="project" value="EnsemblPlants"/>
</dbReference>
<dbReference type="FunFam" id="3.40.50.300:FF:002111">
    <property type="entry name" value="Origin of replication complex subunit 1"/>
    <property type="match status" value="1"/>
</dbReference>
<dbReference type="Gene3D" id="1.10.8.60">
    <property type="match status" value="1"/>
</dbReference>
<dbReference type="Gene3D" id="3.40.50.300">
    <property type="entry name" value="P-loop containing nucleotide triphosphate hydrolases"/>
    <property type="match status" value="1"/>
</dbReference>
<dbReference type="InterPro" id="IPR041664">
    <property type="entry name" value="AAA_16"/>
</dbReference>
<dbReference type="InterPro" id="IPR020796">
    <property type="entry name" value="ORC5"/>
</dbReference>
<dbReference type="InterPro" id="IPR047088">
    <property type="entry name" value="ORC5_C"/>
</dbReference>
<dbReference type="InterPro" id="IPR048866">
    <property type="entry name" value="ORC5_lid"/>
</dbReference>
<dbReference type="InterPro" id="IPR027417">
    <property type="entry name" value="P-loop_NTPase"/>
</dbReference>
<dbReference type="PANTHER" id="PTHR12705">
    <property type="entry name" value="ORIGIN RECOGNITION COMPLEX SUBUNIT 5"/>
    <property type="match status" value="1"/>
</dbReference>
<dbReference type="PANTHER" id="PTHR12705:SF0">
    <property type="entry name" value="ORIGIN RECOGNITION COMPLEX SUBUNIT 5"/>
    <property type="match status" value="1"/>
</dbReference>
<dbReference type="Pfam" id="PF13191">
    <property type="entry name" value="AAA_16"/>
    <property type="match status" value="1"/>
</dbReference>
<dbReference type="Pfam" id="PF14630">
    <property type="entry name" value="ORC5_C"/>
    <property type="match status" value="1"/>
</dbReference>
<dbReference type="Pfam" id="PF21639">
    <property type="entry name" value="ORC5_lid"/>
    <property type="match status" value="1"/>
</dbReference>
<dbReference type="SUPFAM" id="SSF52540">
    <property type="entry name" value="P-loop containing nucleoside triphosphate hydrolases"/>
    <property type="match status" value="1"/>
</dbReference>
<accession>B8AK78</accession>
<reference key="1">
    <citation type="journal article" date="2005" name="PLoS Biol.">
        <title>The genomes of Oryza sativa: a history of duplications.</title>
        <authorList>
            <person name="Yu J."/>
            <person name="Wang J."/>
            <person name="Lin W."/>
            <person name="Li S."/>
            <person name="Li H."/>
            <person name="Zhou J."/>
            <person name="Ni P."/>
            <person name="Dong W."/>
            <person name="Hu S."/>
            <person name="Zeng C."/>
            <person name="Zhang J."/>
            <person name="Zhang Y."/>
            <person name="Li R."/>
            <person name="Xu Z."/>
            <person name="Li S."/>
            <person name="Li X."/>
            <person name="Zheng H."/>
            <person name="Cong L."/>
            <person name="Lin L."/>
            <person name="Yin J."/>
            <person name="Geng J."/>
            <person name="Li G."/>
            <person name="Shi J."/>
            <person name="Liu J."/>
            <person name="Lv H."/>
            <person name="Li J."/>
            <person name="Wang J."/>
            <person name="Deng Y."/>
            <person name="Ran L."/>
            <person name="Shi X."/>
            <person name="Wang X."/>
            <person name="Wu Q."/>
            <person name="Li C."/>
            <person name="Ren X."/>
            <person name="Wang J."/>
            <person name="Wang X."/>
            <person name="Li D."/>
            <person name="Liu D."/>
            <person name="Zhang X."/>
            <person name="Ji Z."/>
            <person name="Zhao W."/>
            <person name="Sun Y."/>
            <person name="Zhang Z."/>
            <person name="Bao J."/>
            <person name="Han Y."/>
            <person name="Dong L."/>
            <person name="Ji J."/>
            <person name="Chen P."/>
            <person name="Wu S."/>
            <person name="Liu J."/>
            <person name="Xiao Y."/>
            <person name="Bu D."/>
            <person name="Tan J."/>
            <person name="Yang L."/>
            <person name="Ye C."/>
            <person name="Zhang J."/>
            <person name="Xu J."/>
            <person name="Zhou Y."/>
            <person name="Yu Y."/>
            <person name="Zhang B."/>
            <person name="Zhuang S."/>
            <person name="Wei H."/>
            <person name="Liu B."/>
            <person name="Lei M."/>
            <person name="Yu H."/>
            <person name="Li Y."/>
            <person name="Xu H."/>
            <person name="Wei S."/>
            <person name="He X."/>
            <person name="Fang L."/>
            <person name="Zhang Z."/>
            <person name="Zhang Y."/>
            <person name="Huang X."/>
            <person name="Su Z."/>
            <person name="Tong W."/>
            <person name="Li J."/>
            <person name="Tong Z."/>
            <person name="Li S."/>
            <person name="Ye J."/>
            <person name="Wang L."/>
            <person name="Fang L."/>
            <person name="Lei T."/>
            <person name="Chen C.-S."/>
            <person name="Chen H.-C."/>
            <person name="Xu Z."/>
            <person name="Li H."/>
            <person name="Huang H."/>
            <person name="Zhang F."/>
            <person name="Xu H."/>
            <person name="Li N."/>
            <person name="Zhao C."/>
            <person name="Li S."/>
            <person name="Dong L."/>
            <person name="Huang Y."/>
            <person name="Li L."/>
            <person name="Xi Y."/>
            <person name="Qi Q."/>
            <person name="Li W."/>
            <person name="Zhang B."/>
            <person name="Hu W."/>
            <person name="Zhang Y."/>
            <person name="Tian X."/>
            <person name="Jiao Y."/>
            <person name="Liang X."/>
            <person name="Jin J."/>
            <person name="Gao L."/>
            <person name="Zheng W."/>
            <person name="Hao B."/>
            <person name="Liu S.-M."/>
            <person name="Wang W."/>
            <person name="Yuan L."/>
            <person name="Cao M."/>
            <person name="McDermott J."/>
            <person name="Samudrala R."/>
            <person name="Wang J."/>
            <person name="Wong G.K.-S."/>
            <person name="Yang H."/>
        </authorList>
    </citation>
    <scope>NUCLEOTIDE SEQUENCE [LARGE SCALE GENOMIC DNA]</scope>
    <source>
        <strain>cv. 93-11</strain>
    </source>
</reference>
<organism evidence="6">
    <name type="scientific">Oryza sativa subsp. indica</name>
    <name type="common">Rice</name>
    <dbReference type="NCBI Taxonomy" id="39946"/>
    <lineage>
        <taxon>Eukaryota</taxon>
        <taxon>Viridiplantae</taxon>
        <taxon>Streptophyta</taxon>
        <taxon>Embryophyta</taxon>
        <taxon>Tracheophyta</taxon>
        <taxon>Spermatophyta</taxon>
        <taxon>Magnoliopsida</taxon>
        <taxon>Liliopsida</taxon>
        <taxon>Poales</taxon>
        <taxon>Poaceae</taxon>
        <taxon>BOP clade</taxon>
        <taxon>Oryzoideae</taxon>
        <taxon>Oryzeae</taxon>
        <taxon>Oryzinae</taxon>
        <taxon>Oryza</taxon>
        <taxon>Oryza sativa</taxon>
    </lineage>
</organism>
<keyword id="KW-0067">ATP-binding</keyword>
<keyword id="KW-0235">DNA replication</keyword>
<keyword id="KW-0547">Nucleotide-binding</keyword>
<keyword id="KW-0539">Nucleus</keyword>
<keyword id="KW-1185">Reference proteome</keyword>
<evidence type="ECO:0000250" key="1">
    <source>
        <dbReference type="UniProtKB" id="O43913"/>
    </source>
</evidence>
<evidence type="ECO:0000250" key="2">
    <source>
        <dbReference type="UniProtKB" id="Q6EWX0"/>
    </source>
</evidence>
<evidence type="ECO:0000255" key="3"/>
<evidence type="ECO:0000256" key="4">
    <source>
        <dbReference type="SAM" id="MobiDB-lite"/>
    </source>
</evidence>
<evidence type="ECO:0000305" key="5"/>
<evidence type="ECO:0000312" key="6">
    <source>
        <dbReference type="EMBL" id="EEC76215.1"/>
    </source>
</evidence>
<name>ORC5_ORYSI</name>